<accession>B4E7Y8</accession>
<organism>
    <name type="scientific">Burkholderia cenocepacia (strain ATCC BAA-245 / DSM 16553 / LMG 16656 / NCTC 13227 / J2315 / CF5610)</name>
    <name type="common">Burkholderia cepacia (strain J2315)</name>
    <dbReference type="NCBI Taxonomy" id="216591"/>
    <lineage>
        <taxon>Bacteria</taxon>
        <taxon>Pseudomonadati</taxon>
        <taxon>Pseudomonadota</taxon>
        <taxon>Betaproteobacteria</taxon>
        <taxon>Burkholderiales</taxon>
        <taxon>Burkholderiaceae</taxon>
        <taxon>Burkholderia</taxon>
        <taxon>Burkholderia cepacia complex</taxon>
    </lineage>
</organism>
<protein>
    <recommendedName>
        <fullName evidence="1">Acetylglutamate kinase</fullName>
        <ecNumber evidence="1">2.7.2.8</ecNumber>
    </recommendedName>
    <alternativeName>
        <fullName evidence="1">N-acetyl-L-glutamate 5-phosphotransferase</fullName>
    </alternativeName>
    <alternativeName>
        <fullName evidence="1">NAG kinase</fullName>
        <shortName evidence="1">NAGK</shortName>
    </alternativeName>
</protein>
<proteinExistence type="inferred from homology"/>
<name>ARGB_BURCJ</name>
<keyword id="KW-0028">Amino-acid biosynthesis</keyword>
<keyword id="KW-0055">Arginine biosynthesis</keyword>
<keyword id="KW-0067">ATP-binding</keyword>
<keyword id="KW-0963">Cytoplasm</keyword>
<keyword id="KW-0418">Kinase</keyword>
<keyword id="KW-0547">Nucleotide-binding</keyword>
<keyword id="KW-0808">Transferase</keyword>
<feature type="chain" id="PRO_1000092851" description="Acetylglutamate kinase">
    <location>
        <begin position="1"/>
        <end position="299"/>
    </location>
</feature>
<feature type="binding site" evidence="1">
    <location>
        <begin position="72"/>
        <end position="73"/>
    </location>
    <ligand>
        <name>substrate</name>
    </ligand>
</feature>
<feature type="binding site" evidence="1">
    <location>
        <position position="94"/>
    </location>
    <ligand>
        <name>substrate</name>
    </ligand>
</feature>
<feature type="binding site" evidence="1">
    <location>
        <position position="196"/>
    </location>
    <ligand>
        <name>substrate</name>
    </ligand>
</feature>
<feature type="site" description="Transition state stabilizer" evidence="1">
    <location>
        <position position="37"/>
    </location>
</feature>
<feature type="site" description="Transition state stabilizer" evidence="1">
    <location>
        <position position="256"/>
    </location>
</feature>
<reference key="1">
    <citation type="journal article" date="2009" name="J. Bacteriol.">
        <title>The genome of Burkholderia cenocepacia J2315, an epidemic pathogen of cystic fibrosis patients.</title>
        <authorList>
            <person name="Holden M.T."/>
            <person name="Seth-Smith H.M."/>
            <person name="Crossman L.C."/>
            <person name="Sebaihia M."/>
            <person name="Bentley S.D."/>
            <person name="Cerdeno-Tarraga A.M."/>
            <person name="Thomson N.R."/>
            <person name="Bason N."/>
            <person name="Quail M.A."/>
            <person name="Sharp S."/>
            <person name="Cherevach I."/>
            <person name="Churcher C."/>
            <person name="Goodhead I."/>
            <person name="Hauser H."/>
            <person name="Holroyd N."/>
            <person name="Mungall K."/>
            <person name="Scott P."/>
            <person name="Walker D."/>
            <person name="White B."/>
            <person name="Rose H."/>
            <person name="Iversen P."/>
            <person name="Mil-Homens D."/>
            <person name="Rocha E.P."/>
            <person name="Fialho A.M."/>
            <person name="Baldwin A."/>
            <person name="Dowson C."/>
            <person name="Barrell B.G."/>
            <person name="Govan J.R."/>
            <person name="Vandamme P."/>
            <person name="Hart C.A."/>
            <person name="Mahenthiralingam E."/>
            <person name="Parkhill J."/>
        </authorList>
    </citation>
    <scope>NUCLEOTIDE SEQUENCE [LARGE SCALE GENOMIC DNA]</scope>
    <source>
        <strain>ATCC BAA-245 / DSM 16553 / LMG 16656 / NCTC 13227 / J2315 / CF5610</strain>
    </source>
</reference>
<dbReference type="EC" id="2.7.2.8" evidence="1"/>
<dbReference type="EMBL" id="AM747720">
    <property type="protein sequence ID" value="CAR50807.1"/>
    <property type="molecule type" value="Genomic_DNA"/>
</dbReference>
<dbReference type="RefSeq" id="WP_012492338.1">
    <property type="nucleotide sequence ID" value="NC_011000.1"/>
</dbReference>
<dbReference type="SMR" id="B4E7Y8"/>
<dbReference type="KEGG" id="bcj:BCAL0496"/>
<dbReference type="eggNOG" id="COG0548">
    <property type="taxonomic scope" value="Bacteria"/>
</dbReference>
<dbReference type="HOGENOM" id="CLU_053680_0_0_4"/>
<dbReference type="BioCyc" id="BCEN216591:G1G1V-565-MONOMER"/>
<dbReference type="UniPathway" id="UPA00068">
    <property type="reaction ID" value="UER00107"/>
</dbReference>
<dbReference type="Proteomes" id="UP000001035">
    <property type="component" value="Chromosome 1"/>
</dbReference>
<dbReference type="GO" id="GO:0005737">
    <property type="term" value="C:cytoplasm"/>
    <property type="evidence" value="ECO:0007669"/>
    <property type="project" value="UniProtKB-SubCell"/>
</dbReference>
<dbReference type="GO" id="GO:0003991">
    <property type="term" value="F:acetylglutamate kinase activity"/>
    <property type="evidence" value="ECO:0007669"/>
    <property type="project" value="UniProtKB-UniRule"/>
</dbReference>
<dbReference type="GO" id="GO:0005524">
    <property type="term" value="F:ATP binding"/>
    <property type="evidence" value="ECO:0007669"/>
    <property type="project" value="UniProtKB-UniRule"/>
</dbReference>
<dbReference type="GO" id="GO:0042450">
    <property type="term" value="P:arginine biosynthetic process via ornithine"/>
    <property type="evidence" value="ECO:0007669"/>
    <property type="project" value="UniProtKB-UniRule"/>
</dbReference>
<dbReference type="GO" id="GO:0006526">
    <property type="term" value="P:L-arginine biosynthetic process"/>
    <property type="evidence" value="ECO:0007669"/>
    <property type="project" value="UniProtKB-UniPathway"/>
</dbReference>
<dbReference type="CDD" id="cd04250">
    <property type="entry name" value="AAK_NAGK-C"/>
    <property type="match status" value="1"/>
</dbReference>
<dbReference type="FunFam" id="3.40.1160.10:FF:000004">
    <property type="entry name" value="Acetylglutamate kinase"/>
    <property type="match status" value="1"/>
</dbReference>
<dbReference type="Gene3D" id="3.40.1160.10">
    <property type="entry name" value="Acetylglutamate kinase-like"/>
    <property type="match status" value="1"/>
</dbReference>
<dbReference type="HAMAP" id="MF_00082">
    <property type="entry name" value="ArgB"/>
    <property type="match status" value="1"/>
</dbReference>
<dbReference type="InterPro" id="IPR036393">
    <property type="entry name" value="AceGlu_kinase-like_sf"/>
</dbReference>
<dbReference type="InterPro" id="IPR004662">
    <property type="entry name" value="AcgluKinase_fam"/>
</dbReference>
<dbReference type="InterPro" id="IPR037528">
    <property type="entry name" value="ArgB"/>
</dbReference>
<dbReference type="InterPro" id="IPR001048">
    <property type="entry name" value="Asp/Glu/Uridylate_kinase"/>
</dbReference>
<dbReference type="InterPro" id="IPR041727">
    <property type="entry name" value="NAGK-C"/>
</dbReference>
<dbReference type="NCBIfam" id="TIGR00761">
    <property type="entry name" value="argB"/>
    <property type="match status" value="1"/>
</dbReference>
<dbReference type="PANTHER" id="PTHR23342">
    <property type="entry name" value="N-ACETYLGLUTAMATE SYNTHASE"/>
    <property type="match status" value="1"/>
</dbReference>
<dbReference type="PANTHER" id="PTHR23342:SF0">
    <property type="entry name" value="N-ACETYLGLUTAMATE SYNTHASE, MITOCHONDRIAL"/>
    <property type="match status" value="1"/>
</dbReference>
<dbReference type="Pfam" id="PF00696">
    <property type="entry name" value="AA_kinase"/>
    <property type="match status" value="1"/>
</dbReference>
<dbReference type="PIRSF" id="PIRSF000728">
    <property type="entry name" value="NAGK"/>
    <property type="match status" value="1"/>
</dbReference>
<dbReference type="SUPFAM" id="SSF53633">
    <property type="entry name" value="Carbamate kinase-like"/>
    <property type="match status" value="1"/>
</dbReference>
<sequence>MSEPIDLSQIAPTLKAEILAEALPYIRRYHGKSVVIKYGGNAMTEERLKQGFARDVILLKLVGINPVIVHGGGPQIDHALKKIGKAGTFIQGMRVTDEETMEVVEWVLGGEVQQDIVMLINHFGGHAVGLTGKDGGLIHARKLLMPDRDNPGQYIDIGQVGEVEAINPAVVKALQDDAFIPVISPIGFGEDGLSYNINADLVAGKLATVLNAEKLLMMTNIPGVMDKDGNLLTDLSAREIDALFEDGTISGGMLPKISSALDAAKSGVKSVHIVDGRIEHSVLLEILTEQPFGTMIRSH</sequence>
<comment type="function">
    <text evidence="1">Catalyzes the ATP-dependent phosphorylation of N-acetyl-L-glutamate.</text>
</comment>
<comment type="catalytic activity">
    <reaction evidence="1">
        <text>N-acetyl-L-glutamate + ATP = N-acetyl-L-glutamyl 5-phosphate + ADP</text>
        <dbReference type="Rhea" id="RHEA:14629"/>
        <dbReference type="ChEBI" id="CHEBI:30616"/>
        <dbReference type="ChEBI" id="CHEBI:44337"/>
        <dbReference type="ChEBI" id="CHEBI:57936"/>
        <dbReference type="ChEBI" id="CHEBI:456216"/>
        <dbReference type="EC" id="2.7.2.8"/>
    </reaction>
</comment>
<comment type="pathway">
    <text evidence="1">Amino-acid biosynthesis; L-arginine biosynthesis; N(2)-acetyl-L-ornithine from L-glutamate: step 2/4.</text>
</comment>
<comment type="subcellular location">
    <subcellularLocation>
        <location evidence="1">Cytoplasm</location>
    </subcellularLocation>
</comment>
<comment type="similarity">
    <text evidence="1">Belongs to the acetylglutamate kinase family. ArgB subfamily.</text>
</comment>
<evidence type="ECO:0000255" key="1">
    <source>
        <dbReference type="HAMAP-Rule" id="MF_00082"/>
    </source>
</evidence>
<gene>
    <name evidence="1" type="primary">argB</name>
    <name type="ordered locus">BceJ2315_04940</name>
    <name type="ORF">BCAL0496</name>
</gene>